<dbReference type="GO" id="GO:0005576">
    <property type="term" value="C:extracellular region"/>
    <property type="evidence" value="ECO:0007669"/>
    <property type="project" value="UniProtKB-SubCell"/>
</dbReference>
<dbReference type="GO" id="GO:0099106">
    <property type="term" value="F:ion channel regulator activity"/>
    <property type="evidence" value="ECO:0007669"/>
    <property type="project" value="UniProtKB-KW"/>
</dbReference>
<dbReference type="GO" id="GO:0090729">
    <property type="term" value="F:toxin activity"/>
    <property type="evidence" value="ECO:0007669"/>
    <property type="project" value="UniProtKB-KW"/>
</dbReference>
<sequence>QEGNVCHRPCFRCHVCGETIAACAACSICIGCEEVVEDACAGNPCYWCDNCGVNDGSHRTTRDTADKTHGGSQRDRFFQSIA</sequence>
<organism>
    <name type="scientific">Iotyrris olangoensis</name>
    <name type="common">Sea snail</name>
    <name type="synonym">Lophiotoma olangoensis</name>
    <dbReference type="NCBI Taxonomy" id="2420066"/>
    <lineage>
        <taxon>Eukaryota</taxon>
        <taxon>Metazoa</taxon>
        <taxon>Spiralia</taxon>
        <taxon>Lophotrochozoa</taxon>
        <taxon>Mollusca</taxon>
        <taxon>Gastropoda</taxon>
        <taxon>Caenogastropoda</taxon>
        <taxon>Neogastropoda</taxon>
        <taxon>Conoidea</taxon>
        <taxon>Turridae</taxon>
        <taxon>Iotyrris</taxon>
    </lineage>
</organism>
<name>TU139_IOTOL</name>
<reference key="1">
    <citation type="journal article" date="2006" name="J. Mol. Evol.">
        <title>Genes expressed in a turrid venom duct: divergence and similarity to conotoxins.</title>
        <authorList>
            <person name="Watkins M."/>
            <person name="Hillyard D.R."/>
            <person name="Olivera B.M."/>
        </authorList>
    </citation>
    <scope>NUCLEOTIDE SEQUENCE [MRNA]</scope>
    <source>
        <tissue>Venom duct</tissue>
    </source>
</reference>
<feature type="chain" id="PRO_0000419854" description="Turripeptide OL139">
    <location>
        <begin position="1"/>
        <end position="82"/>
    </location>
</feature>
<feature type="region of interest" description="Disordered" evidence="2">
    <location>
        <begin position="58"/>
        <end position="82"/>
    </location>
</feature>
<proteinExistence type="evidence at transcript level"/>
<comment type="function">
    <text evidence="1">Acts as a neurotoxin by inhibiting an ion channel.</text>
</comment>
<comment type="subcellular location">
    <subcellularLocation>
        <location evidence="1">Secreted</location>
    </subcellularLocation>
</comment>
<comment type="tissue specificity">
    <text>Expressed by the venom duct.</text>
</comment>
<comment type="domain">
    <text>The cysteine framework is C-C-C-C-C-C-C-C-C-C-C-C.</text>
</comment>
<comment type="PTM">
    <text evidence="1">Contains 6 disulfide bonds.</text>
</comment>
<protein>
    <recommendedName>
        <fullName>Turripeptide OL139</fullName>
    </recommendedName>
</protein>
<evidence type="ECO:0000250" key="1"/>
<evidence type="ECO:0000256" key="2">
    <source>
        <dbReference type="SAM" id="MobiDB-lite"/>
    </source>
</evidence>
<keyword id="KW-1015">Disulfide bond</keyword>
<keyword id="KW-0872">Ion channel impairing toxin</keyword>
<keyword id="KW-0528">Neurotoxin</keyword>
<keyword id="KW-0964">Secreted</keyword>
<keyword id="KW-0800">Toxin</keyword>
<accession>P0DKN8</accession>